<name>BRK3_BOMVA</name>
<organism evidence="3">
    <name type="scientific">Bombina variegata</name>
    <name type="common">Yellow-bellied toad</name>
    <dbReference type="NCBI Taxonomy" id="8348"/>
    <lineage>
        <taxon>Eukaryota</taxon>
        <taxon>Metazoa</taxon>
        <taxon>Chordata</taxon>
        <taxon>Craniata</taxon>
        <taxon>Vertebrata</taxon>
        <taxon>Euteleostomi</taxon>
        <taxon>Amphibia</taxon>
        <taxon>Batrachia</taxon>
        <taxon>Anura</taxon>
        <taxon>Bombinatoridae</taxon>
        <taxon>Bombina</taxon>
    </lineage>
</organism>
<accession>P83058</accession>
<protein>
    <recommendedName>
        <fullName>[Thr6]-bradykinin</fullName>
    </recommendedName>
</protein>
<evidence type="ECO:0000250" key="1"/>
<evidence type="ECO:0000269" key="2">
    <source ref="1"/>
</evidence>
<evidence type="ECO:0000305" key="3"/>
<sequence length="9" mass="1074">RPPGFTPFR</sequence>
<reference evidence="3" key="1">
    <citation type="submission" date="2001-07" db="UniProtKB">
        <title>Cloning and post-translational processing of frog skin kininogens.</title>
        <authorList>
            <person name="Chen T.B."/>
            <person name="Orr D.F."/>
            <person name="Bjourson A.J."/>
            <person name="McClean S."/>
            <person name="Rao P.F."/>
            <person name="Shaw C."/>
        </authorList>
    </citation>
    <scope>PROTEIN SEQUENCE</scope>
    <scope>SUBCELLULAR LOCATION</scope>
    <scope>TISSUE SPECIFICITY</scope>
    <source>
        <tissue>Skin secretion</tissue>
    </source>
</reference>
<reference key="2">
    <citation type="journal article" date="2002" name="Eur. J. Biochem.">
        <title>Novel bradykinins and their precursor cDNAs from European yellow-bellied toad (Bombina variegata) skin.</title>
        <authorList>
            <person name="Chen T."/>
            <person name="Orr D.F."/>
            <person name="Bjourson A.J."/>
            <person name="McClean S."/>
            <person name="O'Rourke M."/>
            <person name="Hirst D.G."/>
            <person name="Rao P."/>
            <person name="Shaw C."/>
        </authorList>
    </citation>
    <scope>SKIN SECRETION COMPOSITION</scope>
    <source>
        <tissue>Skin secretion</tissue>
    </source>
</reference>
<dbReference type="GO" id="GO:0005576">
    <property type="term" value="C:extracellular region"/>
    <property type="evidence" value="ECO:0007669"/>
    <property type="project" value="UniProtKB-SubCell"/>
</dbReference>
<dbReference type="GO" id="GO:0090729">
    <property type="term" value="F:toxin activity"/>
    <property type="evidence" value="ECO:0007669"/>
    <property type="project" value="UniProtKB-KW"/>
</dbReference>
<dbReference type="GO" id="GO:0006952">
    <property type="term" value="P:defense response"/>
    <property type="evidence" value="ECO:0007669"/>
    <property type="project" value="UniProtKB-KW"/>
</dbReference>
<keyword id="KW-0878">Amphibian defense peptide</keyword>
<keyword id="KW-1222">Bradykinin receptor impairing toxin</keyword>
<keyword id="KW-0903">Direct protein sequencing</keyword>
<keyword id="KW-1213">G-protein coupled receptor impairing toxin</keyword>
<keyword id="KW-0964">Secreted</keyword>
<keyword id="KW-0800">Toxin</keyword>
<proteinExistence type="evidence at protein level"/>
<feature type="peptide" id="PRO_0000043520" description="[Thr6]-bradykinin">
    <location>
        <begin position="1"/>
        <end position="9"/>
    </location>
</feature>
<comment type="function">
    <text evidence="1">[Thr6]-bradykinin: inhibits ACE with a Ki of 1.6 uM, and targets B2 bradykinin receptor (BDKRB2). Provokes contraction of smooth muscle preparation (ileum). In vivo, induces an early hyperalgesic effects in living rats after intraplantar injection (By similarity).</text>
</comment>
<comment type="subcellular location">
    <subcellularLocation>
        <location evidence="2 3">Secreted</location>
    </subcellularLocation>
</comment>
<comment type="tissue specificity">
    <text evidence="2">Expressed by the skin glands.</text>
</comment>
<comment type="similarity">
    <text evidence="3">Belongs to the bradykinin-related peptide family.</text>
</comment>